<organism>
    <name type="scientific">Mus musculus</name>
    <name type="common">Mouse</name>
    <dbReference type="NCBI Taxonomy" id="10090"/>
    <lineage>
        <taxon>Eukaryota</taxon>
        <taxon>Metazoa</taxon>
        <taxon>Chordata</taxon>
        <taxon>Craniata</taxon>
        <taxon>Vertebrata</taxon>
        <taxon>Euteleostomi</taxon>
        <taxon>Mammalia</taxon>
        <taxon>Eutheria</taxon>
        <taxon>Euarchontoglires</taxon>
        <taxon>Glires</taxon>
        <taxon>Rodentia</taxon>
        <taxon>Myomorpha</taxon>
        <taxon>Muroidea</taxon>
        <taxon>Muridae</taxon>
        <taxon>Murinae</taxon>
        <taxon>Mus</taxon>
        <taxon>Mus</taxon>
    </lineage>
</organism>
<accession>Q8BVP1</accession>
<sequence length="470" mass="53787">MSNHEKMSTTDLMENLREELTCFICLDYFSSPVTTECGHSFCLMCLLKSWEEHNTPLSCPECWRTLGAPHFQANERLGRLANIGRQLRSQVLQSEDEQSICGRMPGPSWVFSDDEQSVINVSPPSQGTNKACFSSEAEEQHKEKLQDIINILRKKKKEVQAILNHEKERVMLCKEETKTCKQVVVSEYMKMHQFLKEEEQLQLQLLEREEKANMKKLRENEIQLTQQIRRLGKMIGRIESTCQNLTLESFEEVKGAMDRYESLLFQSPETTITELSLCHITGMREMLRKFSTDITLDPATANAYLLLSEDLKSVRYGGTRQQLPDNPERFDQSATVLGAQIFTCGRHYWEVEVGKKTEWEVGICKDSVNRKGNLPKPPGDLFSLIGLKIGDDYSLWVSSPLKGQHVREPVHKVGVFLDYDSGHIAFYNATDESLIYSFPPTPFHEALRPIFSPCLPNEGTNTDPLIICHI</sequence>
<protein>
    <recommendedName>
        <fullName>Probable E3 ubiquitin-protein ligase TRIML1</fullName>
        <ecNumber>2.3.2.27</ecNumber>
    </recommendedName>
    <alternativeName>
        <fullName evidence="5">RING-type E3 ubiquitin transferase TRIML1</fullName>
    </alternativeName>
    <alternativeName>
        <fullName>Tripartite motif family-like protein 1</fullName>
    </alternativeName>
</protein>
<keyword id="KW-0175">Coiled coil</keyword>
<keyword id="KW-0217">Developmental protein</keyword>
<keyword id="KW-0479">Metal-binding</keyword>
<keyword id="KW-1185">Reference proteome</keyword>
<keyword id="KW-0808">Transferase</keyword>
<keyword id="KW-0833">Ubl conjugation pathway</keyword>
<keyword id="KW-0862">Zinc</keyword>
<keyword id="KW-0863">Zinc-finger</keyword>
<feature type="chain" id="PRO_0000274599" description="Probable E3 ubiquitin-protein ligase TRIML1">
    <location>
        <begin position="1"/>
        <end position="470"/>
    </location>
</feature>
<feature type="domain" description="B30.2/SPRY" evidence="3">
    <location>
        <begin position="273"/>
        <end position="470"/>
    </location>
</feature>
<feature type="zinc finger region" description="RING-type" evidence="2">
    <location>
        <begin position="22"/>
        <end position="63"/>
    </location>
</feature>
<feature type="coiled-coil region" evidence="1">
    <location>
        <begin position="135"/>
        <end position="170"/>
    </location>
</feature>
<feature type="coiled-coil region" evidence="1">
    <location>
        <begin position="196"/>
        <end position="235"/>
    </location>
</feature>
<proteinExistence type="evidence at protein level"/>
<evidence type="ECO:0000255" key="1"/>
<evidence type="ECO:0000255" key="2">
    <source>
        <dbReference type="PROSITE-ProRule" id="PRU00175"/>
    </source>
</evidence>
<evidence type="ECO:0000255" key="3">
    <source>
        <dbReference type="PROSITE-ProRule" id="PRU00548"/>
    </source>
</evidence>
<evidence type="ECO:0000269" key="4">
    <source>
    </source>
</evidence>
<evidence type="ECO:0000305" key="5"/>
<gene>
    <name type="primary">Triml1</name>
</gene>
<name>TRIML_MOUSE</name>
<comment type="function">
    <text evidence="4">Probable E3 ubiquitin-protein ligase which plays an important role in blastocyst development. Involved in progression of blastocyst stage and subsequent embryo development.</text>
</comment>
<comment type="catalytic activity">
    <reaction>
        <text>S-ubiquitinyl-[E2 ubiquitin-conjugating enzyme]-L-cysteine + [acceptor protein]-L-lysine = [E2 ubiquitin-conjugating enzyme]-L-cysteine + N(6)-ubiquitinyl-[acceptor protein]-L-lysine.</text>
        <dbReference type="EC" id="2.3.2.27"/>
    </reaction>
</comment>
<comment type="pathway">
    <text>Protein modification; protein ubiquitination.</text>
</comment>
<comment type="subunit">
    <text evidence="4">Interacts with USP5.</text>
</comment>
<comment type="tissue specificity">
    <text evidence="4">Testis.</text>
</comment>
<comment type="developmental stage">
    <text evidence="4">Expressed from two-cell to blastocyst stage of embryo development.</text>
</comment>
<dbReference type="EC" id="2.3.2.27"/>
<dbReference type="EMBL" id="AK077092">
    <property type="protein sequence ID" value="BAC36608.1"/>
    <property type="molecule type" value="mRNA"/>
</dbReference>
<dbReference type="CCDS" id="CCDS22266.1"/>
<dbReference type="RefSeq" id="NP_808410.1">
    <property type="nucleotide sequence ID" value="NM_177742.4"/>
</dbReference>
<dbReference type="SMR" id="Q8BVP1"/>
<dbReference type="FunCoup" id="Q8BVP1">
    <property type="interactions" value="145"/>
</dbReference>
<dbReference type="STRING" id="10090.ENSMUSP00000050267"/>
<dbReference type="iPTMnet" id="Q8BVP1"/>
<dbReference type="PhosphoSitePlus" id="Q8BVP1"/>
<dbReference type="PaxDb" id="10090-ENSMUSP00000050267"/>
<dbReference type="ProteomicsDB" id="258848"/>
<dbReference type="Antibodypedia" id="29145">
    <property type="antibodies" value="119 antibodies from 18 providers"/>
</dbReference>
<dbReference type="DNASU" id="244448"/>
<dbReference type="Ensembl" id="ENSMUST00000059692.4">
    <property type="protein sequence ID" value="ENSMUSP00000050267.4"/>
    <property type="gene ID" value="ENSMUSG00000031651.6"/>
</dbReference>
<dbReference type="GeneID" id="244448"/>
<dbReference type="KEGG" id="mmu:244448"/>
<dbReference type="UCSC" id="uc009lnz.1">
    <property type="organism name" value="mouse"/>
</dbReference>
<dbReference type="AGR" id="MGI:2687279"/>
<dbReference type="CTD" id="339976"/>
<dbReference type="MGI" id="MGI:2687279">
    <property type="gene designation" value="Triml1"/>
</dbReference>
<dbReference type="VEuPathDB" id="HostDB:ENSMUSG00000031651"/>
<dbReference type="eggNOG" id="KOG2177">
    <property type="taxonomic scope" value="Eukaryota"/>
</dbReference>
<dbReference type="GeneTree" id="ENSGT00940000154582"/>
<dbReference type="HOGENOM" id="CLU_013137_0_0_1"/>
<dbReference type="InParanoid" id="Q8BVP1"/>
<dbReference type="OMA" id="GHSFCLM"/>
<dbReference type="OrthoDB" id="6105938at2759"/>
<dbReference type="PhylomeDB" id="Q8BVP1"/>
<dbReference type="TreeFam" id="TF338674"/>
<dbReference type="UniPathway" id="UPA00143"/>
<dbReference type="BioGRID-ORCS" id="244448">
    <property type="hits" value="2 hits in 77 CRISPR screens"/>
</dbReference>
<dbReference type="ChiTaRS" id="Triml1">
    <property type="organism name" value="mouse"/>
</dbReference>
<dbReference type="PRO" id="PR:Q8BVP1"/>
<dbReference type="Proteomes" id="UP000000589">
    <property type="component" value="Chromosome 8"/>
</dbReference>
<dbReference type="RNAct" id="Q8BVP1">
    <property type="molecule type" value="protein"/>
</dbReference>
<dbReference type="Bgee" id="ENSMUSG00000031651">
    <property type="expression patterns" value="Expressed in spermatid and 13 other cell types or tissues"/>
</dbReference>
<dbReference type="GO" id="GO:0016740">
    <property type="term" value="F:transferase activity"/>
    <property type="evidence" value="ECO:0007669"/>
    <property type="project" value="UniProtKB-KW"/>
</dbReference>
<dbReference type="GO" id="GO:0008270">
    <property type="term" value="F:zinc ion binding"/>
    <property type="evidence" value="ECO:0007669"/>
    <property type="project" value="UniProtKB-KW"/>
</dbReference>
<dbReference type="GO" id="GO:0016567">
    <property type="term" value="P:protein ubiquitination"/>
    <property type="evidence" value="ECO:0007669"/>
    <property type="project" value="UniProtKB-UniPathway"/>
</dbReference>
<dbReference type="CDD" id="cd13733">
    <property type="entry name" value="SPRY_PRY_C-I_1"/>
    <property type="match status" value="1"/>
</dbReference>
<dbReference type="FunFam" id="2.60.120.920:FF:000040">
    <property type="entry name" value="Ret finger protein-like 4A"/>
    <property type="match status" value="1"/>
</dbReference>
<dbReference type="Gene3D" id="2.60.120.920">
    <property type="match status" value="1"/>
</dbReference>
<dbReference type="Gene3D" id="3.30.40.10">
    <property type="entry name" value="Zinc/RING finger domain, C3HC4 (zinc finger)"/>
    <property type="match status" value="1"/>
</dbReference>
<dbReference type="InterPro" id="IPR001870">
    <property type="entry name" value="B30.2/SPRY"/>
</dbReference>
<dbReference type="InterPro" id="IPR043136">
    <property type="entry name" value="B30.2/SPRY_sf"/>
</dbReference>
<dbReference type="InterPro" id="IPR003879">
    <property type="entry name" value="Butyrophylin_SPRY"/>
</dbReference>
<dbReference type="InterPro" id="IPR013320">
    <property type="entry name" value="ConA-like_dom_sf"/>
</dbReference>
<dbReference type="InterPro" id="IPR006574">
    <property type="entry name" value="PRY"/>
</dbReference>
<dbReference type="InterPro" id="IPR003877">
    <property type="entry name" value="SPRY_dom"/>
</dbReference>
<dbReference type="InterPro" id="IPR050143">
    <property type="entry name" value="TRIM/RBCC"/>
</dbReference>
<dbReference type="InterPro" id="IPR001841">
    <property type="entry name" value="Znf_RING"/>
</dbReference>
<dbReference type="InterPro" id="IPR013083">
    <property type="entry name" value="Znf_RING/FYVE/PHD"/>
</dbReference>
<dbReference type="InterPro" id="IPR017907">
    <property type="entry name" value="Znf_RING_CS"/>
</dbReference>
<dbReference type="PANTHER" id="PTHR24103">
    <property type="entry name" value="E3 UBIQUITIN-PROTEIN LIGASE TRIM"/>
    <property type="match status" value="1"/>
</dbReference>
<dbReference type="Pfam" id="PF13765">
    <property type="entry name" value="PRY"/>
    <property type="match status" value="1"/>
</dbReference>
<dbReference type="Pfam" id="PF00622">
    <property type="entry name" value="SPRY"/>
    <property type="match status" value="1"/>
</dbReference>
<dbReference type="Pfam" id="PF15227">
    <property type="entry name" value="zf-C3HC4_4"/>
    <property type="match status" value="1"/>
</dbReference>
<dbReference type="PRINTS" id="PR01407">
    <property type="entry name" value="BUTYPHLNCDUF"/>
</dbReference>
<dbReference type="SMART" id="SM00589">
    <property type="entry name" value="PRY"/>
    <property type="match status" value="1"/>
</dbReference>
<dbReference type="SMART" id="SM00184">
    <property type="entry name" value="RING"/>
    <property type="match status" value="1"/>
</dbReference>
<dbReference type="SMART" id="SM00449">
    <property type="entry name" value="SPRY"/>
    <property type="match status" value="1"/>
</dbReference>
<dbReference type="SUPFAM" id="SSF49899">
    <property type="entry name" value="Concanavalin A-like lectins/glucanases"/>
    <property type="match status" value="1"/>
</dbReference>
<dbReference type="SUPFAM" id="SSF57850">
    <property type="entry name" value="RING/U-box"/>
    <property type="match status" value="1"/>
</dbReference>
<dbReference type="PROSITE" id="PS50188">
    <property type="entry name" value="B302_SPRY"/>
    <property type="match status" value="1"/>
</dbReference>
<dbReference type="PROSITE" id="PS00518">
    <property type="entry name" value="ZF_RING_1"/>
    <property type="match status" value="1"/>
</dbReference>
<dbReference type="PROSITE" id="PS50089">
    <property type="entry name" value="ZF_RING_2"/>
    <property type="match status" value="1"/>
</dbReference>
<reference key="1">
    <citation type="journal article" date="2005" name="Science">
        <title>The transcriptional landscape of the mammalian genome.</title>
        <authorList>
            <person name="Carninci P."/>
            <person name="Kasukawa T."/>
            <person name="Katayama S."/>
            <person name="Gough J."/>
            <person name="Frith M.C."/>
            <person name="Maeda N."/>
            <person name="Oyama R."/>
            <person name="Ravasi T."/>
            <person name="Lenhard B."/>
            <person name="Wells C."/>
            <person name="Kodzius R."/>
            <person name="Shimokawa K."/>
            <person name="Bajic V.B."/>
            <person name="Brenner S.E."/>
            <person name="Batalov S."/>
            <person name="Forrest A.R."/>
            <person name="Zavolan M."/>
            <person name="Davis M.J."/>
            <person name="Wilming L.G."/>
            <person name="Aidinis V."/>
            <person name="Allen J.E."/>
            <person name="Ambesi-Impiombato A."/>
            <person name="Apweiler R."/>
            <person name="Aturaliya R.N."/>
            <person name="Bailey T.L."/>
            <person name="Bansal M."/>
            <person name="Baxter L."/>
            <person name="Beisel K.W."/>
            <person name="Bersano T."/>
            <person name="Bono H."/>
            <person name="Chalk A.M."/>
            <person name="Chiu K.P."/>
            <person name="Choudhary V."/>
            <person name="Christoffels A."/>
            <person name="Clutterbuck D.R."/>
            <person name="Crowe M.L."/>
            <person name="Dalla E."/>
            <person name="Dalrymple B.P."/>
            <person name="de Bono B."/>
            <person name="Della Gatta G."/>
            <person name="di Bernardo D."/>
            <person name="Down T."/>
            <person name="Engstrom P."/>
            <person name="Fagiolini M."/>
            <person name="Faulkner G."/>
            <person name="Fletcher C.F."/>
            <person name="Fukushima T."/>
            <person name="Furuno M."/>
            <person name="Futaki S."/>
            <person name="Gariboldi M."/>
            <person name="Georgii-Hemming P."/>
            <person name="Gingeras T.R."/>
            <person name="Gojobori T."/>
            <person name="Green R.E."/>
            <person name="Gustincich S."/>
            <person name="Harbers M."/>
            <person name="Hayashi Y."/>
            <person name="Hensch T.K."/>
            <person name="Hirokawa N."/>
            <person name="Hill D."/>
            <person name="Huminiecki L."/>
            <person name="Iacono M."/>
            <person name="Ikeo K."/>
            <person name="Iwama A."/>
            <person name="Ishikawa T."/>
            <person name="Jakt M."/>
            <person name="Kanapin A."/>
            <person name="Katoh M."/>
            <person name="Kawasawa Y."/>
            <person name="Kelso J."/>
            <person name="Kitamura H."/>
            <person name="Kitano H."/>
            <person name="Kollias G."/>
            <person name="Krishnan S.P."/>
            <person name="Kruger A."/>
            <person name="Kummerfeld S.K."/>
            <person name="Kurochkin I.V."/>
            <person name="Lareau L.F."/>
            <person name="Lazarevic D."/>
            <person name="Lipovich L."/>
            <person name="Liu J."/>
            <person name="Liuni S."/>
            <person name="McWilliam S."/>
            <person name="Madan Babu M."/>
            <person name="Madera M."/>
            <person name="Marchionni L."/>
            <person name="Matsuda H."/>
            <person name="Matsuzawa S."/>
            <person name="Miki H."/>
            <person name="Mignone F."/>
            <person name="Miyake S."/>
            <person name="Morris K."/>
            <person name="Mottagui-Tabar S."/>
            <person name="Mulder N."/>
            <person name="Nakano N."/>
            <person name="Nakauchi H."/>
            <person name="Ng P."/>
            <person name="Nilsson R."/>
            <person name="Nishiguchi S."/>
            <person name="Nishikawa S."/>
            <person name="Nori F."/>
            <person name="Ohara O."/>
            <person name="Okazaki Y."/>
            <person name="Orlando V."/>
            <person name="Pang K.C."/>
            <person name="Pavan W.J."/>
            <person name="Pavesi G."/>
            <person name="Pesole G."/>
            <person name="Petrovsky N."/>
            <person name="Piazza S."/>
            <person name="Reed J."/>
            <person name="Reid J.F."/>
            <person name="Ring B.Z."/>
            <person name="Ringwald M."/>
            <person name="Rost B."/>
            <person name="Ruan Y."/>
            <person name="Salzberg S.L."/>
            <person name="Sandelin A."/>
            <person name="Schneider C."/>
            <person name="Schoenbach C."/>
            <person name="Sekiguchi K."/>
            <person name="Semple C.A."/>
            <person name="Seno S."/>
            <person name="Sessa L."/>
            <person name="Sheng Y."/>
            <person name="Shibata Y."/>
            <person name="Shimada H."/>
            <person name="Shimada K."/>
            <person name="Silva D."/>
            <person name="Sinclair B."/>
            <person name="Sperling S."/>
            <person name="Stupka E."/>
            <person name="Sugiura K."/>
            <person name="Sultana R."/>
            <person name="Takenaka Y."/>
            <person name="Taki K."/>
            <person name="Tammoja K."/>
            <person name="Tan S.L."/>
            <person name="Tang S."/>
            <person name="Taylor M.S."/>
            <person name="Tegner J."/>
            <person name="Teichmann S.A."/>
            <person name="Ueda H.R."/>
            <person name="van Nimwegen E."/>
            <person name="Verardo R."/>
            <person name="Wei C.L."/>
            <person name="Yagi K."/>
            <person name="Yamanishi H."/>
            <person name="Zabarovsky E."/>
            <person name="Zhu S."/>
            <person name="Zimmer A."/>
            <person name="Hide W."/>
            <person name="Bult C."/>
            <person name="Grimmond S.M."/>
            <person name="Teasdale R.D."/>
            <person name="Liu E.T."/>
            <person name="Brusic V."/>
            <person name="Quackenbush J."/>
            <person name="Wahlestedt C."/>
            <person name="Mattick J.S."/>
            <person name="Hume D.A."/>
            <person name="Kai C."/>
            <person name="Sasaki D."/>
            <person name="Tomaru Y."/>
            <person name="Fukuda S."/>
            <person name="Kanamori-Katayama M."/>
            <person name="Suzuki M."/>
            <person name="Aoki J."/>
            <person name="Arakawa T."/>
            <person name="Iida J."/>
            <person name="Imamura K."/>
            <person name="Itoh M."/>
            <person name="Kato T."/>
            <person name="Kawaji H."/>
            <person name="Kawagashira N."/>
            <person name="Kawashima T."/>
            <person name="Kojima M."/>
            <person name="Kondo S."/>
            <person name="Konno H."/>
            <person name="Nakano K."/>
            <person name="Ninomiya N."/>
            <person name="Nishio T."/>
            <person name="Okada M."/>
            <person name="Plessy C."/>
            <person name="Shibata K."/>
            <person name="Shiraki T."/>
            <person name="Suzuki S."/>
            <person name="Tagami M."/>
            <person name="Waki K."/>
            <person name="Watahiki A."/>
            <person name="Okamura-Oho Y."/>
            <person name="Suzuki H."/>
            <person name="Kawai J."/>
            <person name="Hayashizaki Y."/>
        </authorList>
    </citation>
    <scope>NUCLEOTIDE SEQUENCE [LARGE SCALE MRNA]</scope>
    <source>
        <strain>C57BL/6J</strain>
        <tissue>Testis</tissue>
    </source>
</reference>
<reference key="2">
    <citation type="journal article" date="2009" name="Mol. Reprod. Dev.">
        <title>Characterization and potential function of a novel pre-implantation embryo-specific RING finger protein: TRIML1.</title>
        <authorList>
            <person name="Tian L."/>
            <person name="Wu X."/>
            <person name="Lin Y."/>
            <person name="Liu Z."/>
            <person name="Xiong F."/>
            <person name="Han Z."/>
            <person name="Zhou Y."/>
            <person name="Zeng Q."/>
            <person name="Wang Y."/>
            <person name="Deng J."/>
            <person name="Chen H."/>
        </authorList>
    </citation>
    <scope>FUNCTION</scope>
    <scope>INTERACTION WITH USP5</scope>
    <scope>TISSUE SPECIFICITY</scope>
    <scope>DEVELOPMENTAL STAGE</scope>
</reference>